<proteinExistence type="predicted"/>
<sequence>MRTRIREFRAKYGMTQEELAKKVGVRRETIVFLEKGKYNPSLRLAYKIARVFNARIEDLFIFDDEELWGK</sequence>
<gene>
    <name type="ordered locus">AF_1793</name>
</gene>
<organism>
    <name type="scientific">Archaeoglobus fulgidus (strain ATCC 49558 / DSM 4304 / JCM 9628 / NBRC 100126 / VC-16)</name>
    <dbReference type="NCBI Taxonomy" id="224325"/>
    <lineage>
        <taxon>Archaea</taxon>
        <taxon>Methanobacteriati</taxon>
        <taxon>Methanobacteriota</taxon>
        <taxon>Archaeoglobi</taxon>
        <taxon>Archaeoglobales</taxon>
        <taxon>Archaeoglobaceae</taxon>
        <taxon>Archaeoglobus</taxon>
    </lineage>
</organism>
<name>Y1793_ARCFU</name>
<protein>
    <recommendedName>
        <fullName>Uncharacterized HTH-type transcriptional regulator AF_1793</fullName>
    </recommendedName>
</protein>
<evidence type="ECO:0000255" key="1">
    <source>
        <dbReference type="PROSITE-ProRule" id="PRU00257"/>
    </source>
</evidence>
<keyword id="KW-0238">DNA-binding</keyword>
<keyword id="KW-1185">Reference proteome</keyword>
<keyword id="KW-0804">Transcription</keyword>
<keyword id="KW-0805">Transcription regulation</keyword>
<accession>O28481</accession>
<dbReference type="EMBL" id="AE000782">
    <property type="protein sequence ID" value="AAB89470.1"/>
    <property type="molecule type" value="Genomic_DNA"/>
</dbReference>
<dbReference type="PIR" id="H69473">
    <property type="entry name" value="H69473"/>
</dbReference>
<dbReference type="RefSeq" id="WP_010879289.1">
    <property type="nucleotide sequence ID" value="NC_000917.1"/>
</dbReference>
<dbReference type="SMR" id="O28481"/>
<dbReference type="STRING" id="224325.AF_1793"/>
<dbReference type="PaxDb" id="224325-AF_1793"/>
<dbReference type="EnsemblBacteria" id="AAB89470">
    <property type="protein sequence ID" value="AAB89470"/>
    <property type="gene ID" value="AF_1793"/>
</dbReference>
<dbReference type="KEGG" id="afu:AF_1793"/>
<dbReference type="eggNOG" id="arCOG01864">
    <property type="taxonomic scope" value="Archaea"/>
</dbReference>
<dbReference type="HOGENOM" id="CLU_066192_44_1_2"/>
<dbReference type="OrthoDB" id="67699at2157"/>
<dbReference type="PhylomeDB" id="O28481"/>
<dbReference type="Proteomes" id="UP000002199">
    <property type="component" value="Chromosome"/>
</dbReference>
<dbReference type="GO" id="GO:0003677">
    <property type="term" value="F:DNA binding"/>
    <property type="evidence" value="ECO:0007669"/>
    <property type="project" value="UniProtKB-KW"/>
</dbReference>
<dbReference type="CDD" id="cd00093">
    <property type="entry name" value="HTH_XRE"/>
    <property type="match status" value="1"/>
</dbReference>
<dbReference type="Gene3D" id="1.10.260.40">
    <property type="entry name" value="lambda repressor-like DNA-binding domains"/>
    <property type="match status" value="1"/>
</dbReference>
<dbReference type="InterPro" id="IPR001387">
    <property type="entry name" value="Cro/C1-type_HTH"/>
</dbReference>
<dbReference type="InterPro" id="IPR010982">
    <property type="entry name" value="Lambda_DNA-bd_dom_sf"/>
</dbReference>
<dbReference type="PANTHER" id="PTHR46558">
    <property type="entry name" value="TRACRIPTIONAL REGULATORY PROTEIN-RELATED-RELATED"/>
    <property type="match status" value="1"/>
</dbReference>
<dbReference type="PANTHER" id="PTHR46558:SF7">
    <property type="entry name" value="TRANSCRIPTIONAL REGULATOR"/>
    <property type="match status" value="1"/>
</dbReference>
<dbReference type="Pfam" id="PF01381">
    <property type="entry name" value="HTH_3"/>
    <property type="match status" value="1"/>
</dbReference>
<dbReference type="SMART" id="SM00530">
    <property type="entry name" value="HTH_XRE"/>
    <property type="match status" value="1"/>
</dbReference>
<dbReference type="SUPFAM" id="SSF47413">
    <property type="entry name" value="lambda repressor-like DNA-binding domains"/>
    <property type="match status" value="1"/>
</dbReference>
<dbReference type="PROSITE" id="PS50943">
    <property type="entry name" value="HTH_CROC1"/>
    <property type="match status" value="1"/>
</dbReference>
<feature type="chain" id="PRO_0000149787" description="Uncharacterized HTH-type transcriptional regulator AF_1793">
    <location>
        <begin position="1"/>
        <end position="70"/>
    </location>
</feature>
<feature type="domain" description="HTH cro/C1-type" evidence="1">
    <location>
        <begin position="5"/>
        <end position="59"/>
    </location>
</feature>
<feature type="DNA-binding region" description="H-T-H motif" evidence="1">
    <location>
        <begin position="16"/>
        <end position="35"/>
    </location>
</feature>
<reference key="1">
    <citation type="journal article" date="1997" name="Nature">
        <title>The complete genome sequence of the hyperthermophilic, sulphate-reducing archaeon Archaeoglobus fulgidus.</title>
        <authorList>
            <person name="Klenk H.-P."/>
            <person name="Clayton R.A."/>
            <person name="Tomb J.-F."/>
            <person name="White O."/>
            <person name="Nelson K.E."/>
            <person name="Ketchum K.A."/>
            <person name="Dodson R.J."/>
            <person name="Gwinn M.L."/>
            <person name="Hickey E.K."/>
            <person name="Peterson J.D."/>
            <person name="Richardson D.L."/>
            <person name="Kerlavage A.R."/>
            <person name="Graham D.E."/>
            <person name="Kyrpides N.C."/>
            <person name="Fleischmann R.D."/>
            <person name="Quackenbush J."/>
            <person name="Lee N.H."/>
            <person name="Sutton G.G."/>
            <person name="Gill S.R."/>
            <person name="Kirkness E.F."/>
            <person name="Dougherty B.A."/>
            <person name="McKenney K."/>
            <person name="Adams M.D."/>
            <person name="Loftus B.J."/>
            <person name="Peterson S.N."/>
            <person name="Reich C.I."/>
            <person name="McNeil L.K."/>
            <person name="Badger J.H."/>
            <person name="Glodek A."/>
            <person name="Zhou L."/>
            <person name="Overbeek R."/>
            <person name="Gocayne J.D."/>
            <person name="Weidman J.F."/>
            <person name="McDonald L.A."/>
            <person name="Utterback T.R."/>
            <person name="Cotton M.D."/>
            <person name="Spriggs T."/>
            <person name="Artiach P."/>
            <person name="Kaine B.P."/>
            <person name="Sykes S.M."/>
            <person name="Sadow P.W."/>
            <person name="D'Andrea K.P."/>
            <person name="Bowman C."/>
            <person name="Fujii C."/>
            <person name="Garland S.A."/>
            <person name="Mason T.M."/>
            <person name="Olsen G.J."/>
            <person name="Fraser C.M."/>
            <person name="Smith H.O."/>
            <person name="Woese C.R."/>
            <person name="Venter J.C."/>
        </authorList>
    </citation>
    <scope>NUCLEOTIDE SEQUENCE [LARGE SCALE GENOMIC DNA]</scope>
    <source>
        <strain>ATCC 49558 / DSM 4304 / JCM 9628 / NBRC 100126 / VC-16</strain>
    </source>
</reference>